<keyword id="KW-0963">Cytoplasm</keyword>
<keyword id="KW-0671">Queuosine biosynthesis</keyword>
<keyword id="KW-1185">Reference proteome</keyword>
<keyword id="KW-0949">S-adenosyl-L-methionine</keyword>
<keyword id="KW-0808">Transferase</keyword>
<gene>
    <name evidence="1" type="primary">queA</name>
    <name type="ordered locus">Abu_1257</name>
</gene>
<evidence type="ECO:0000255" key="1">
    <source>
        <dbReference type="HAMAP-Rule" id="MF_00113"/>
    </source>
</evidence>
<sequence>MLDPLKTSSYDYNLPKNQIATYPVTPADSAKLLIFNRSTNTIIHSTFKDILEFLPNDLSIFLNDTKVIKARIFGVKDSGGQIELLLNKPLFMDRYLVMIRGKVRVGTKLLFDENLSAIVEEVDEDGSRIVEFFQDEKKLDFLSLVEILNKIGHLPLPPYMNREDEKQDEQNYQTLFAKNYGAVAAPTASLHFTPELLKNLEEKYGLNYLTLHVGAGTFKPVDVEDILSHPMHSEYFEIGIDAKKNLDKANKVLAVGTTVTRTIEYYARTNKIQGECDLFLNPANKPIKVDYLLTNFHLPKSTLIMLVASFIGLEKTLEIYETAIKENYRFYSYGDGMLII</sequence>
<proteinExistence type="inferred from homology"/>
<organism>
    <name type="scientific">Aliarcobacter butzleri (strain RM4018)</name>
    <name type="common">Arcobacter butzleri</name>
    <dbReference type="NCBI Taxonomy" id="367737"/>
    <lineage>
        <taxon>Bacteria</taxon>
        <taxon>Pseudomonadati</taxon>
        <taxon>Campylobacterota</taxon>
        <taxon>Epsilonproteobacteria</taxon>
        <taxon>Campylobacterales</taxon>
        <taxon>Arcobacteraceae</taxon>
        <taxon>Aliarcobacter</taxon>
    </lineage>
</organism>
<accession>A8EU90</accession>
<dbReference type="EC" id="2.4.99.17" evidence="1"/>
<dbReference type="EMBL" id="CP000361">
    <property type="protein sequence ID" value="ABV67514.1"/>
    <property type="molecule type" value="Genomic_DNA"/>
</dbReference>
<dbReference type="RefSeq" id="WP_012012933.1">
    <property type="nucleotide sequence ID" value="NC_009850.1"/>
</dbReference>
<dbReference type="SMR" id="A8EU90"/>
<dbReference type="STRING" id="367737.Abu_1257"/>
<dbReference type="GeneID" id="24303844"/>
<dbReference type="KEGG" id="abu:Abu_1257"/>
<dbReference type="eggNOG" id="COG0809">
    <property type="taxonomic scope" value="Bacteria"/>
</dbReference>
<dbReference type="HOGENOM" id="CLU_039110_1_0_7"/>
<dbReference type="UniPathway" id="UPA00392"/>
<dbReference type="Proteomes" id="UP000001136">
    <property type="component" value="Chromosome"/>
</dbReference>
<dbReference type="GO" id="GO:0005737">
    <property type="term" value="C:cytoplasm"/>
    <property type="evidence" value="ECO:0007669"/>
    <property type="project" value="UniProtKB-SubCell"/>
</dbReference>
<dbReference type="GO" id="GO:0051075">
    <property type="term" value="F:S-adenosylmethionine:tRNA ribosyltransferase-isomerase activity"/>
    <property type="evidence" value="ECO:0007669"/>
    <property type="project" value="UniProtKB-EC"/>
</dbReference>
<dbReference type="GO" id="GO:0008616">
    <property type="term" value="P:queuosine biosynthetic process"/>
    <property type="evidence" value="ECO:0007669"/>
    <property type="project" value="UniProtKB-UniRule"/>
</dbReference>
<dbReference type="GO" id="GO:0002099">
    <property type="term" value="P:tRNA wobble guanine modification"/>
    <property type="evidence" value="ECO:0007669"/>
    <property type="project" value="TreeGrafter"/>
</dbReference>
<dbReference type="Gene3D" id="2.40.10.240">
    <property type="entry name" value="QueA-like"/>
    <property type="match status" value="1"/>
</dbReference>
<dbReference type="Gene3D" id="3.40.1780.10">
    <property type="entry name" value="QueA-like"/>
    <property type="match status" value="2"/>
</dbReference>
<dbReference type="HAMAP" id="MF_00113">
    <property type="entry name" value="QueA"/>
    <property type="match status" value="1"/>
</dbReference>
<dbReference type="InterPro" id="IPR003699">
    <property type="entry name" value="QueA"/>
</dbReference>
<dbReference type="InterPro" id="IPR042118">
    <property type="entry name" value="QueA_dom1"/>
</dbReference>
<dbReference type="InterPro" id="IPR042119">
    <property type="entry name" value="QueA_dom2"/>
</dbReference>
<dbReference type="InterPro" id="IPR036100">
    <property type="entry name" value="QueA_sf"/>
</dbReference>
<dbReference type="NCBIfam" id="NF001140">
    <property type="entry name" value="PRK00147.1"/>
    <property type="match status" value="1"/>
</dbReference>
<dbReference type="NCBIfam" id="TIGR00113">
    <property type="entry name" value="queA"/>
    <property type="match status" value="1"/>
</dbReference>
<dbReference type="PANTHER" id="PTHR30307">
    <property type="entry name" value="S-ADENOSYLMETHIONINE:TRNA RIBOSYLTRANSFERASE-ISOMERASE"/>
    <property type="match status" value="1"/>
</dbReference>
<dbReference type="PANTHER" id="PTHR30307:SF0">
    <property type="entry name" value="S-ADENOSYLMETHIONINE:TRNA RIBOSYLTRANSFERASE-ISOMERASE"/>
    <property type="match status" value="1"/>
</dbReference>
<dbReference type="Pfam" id="PF02547">
    <property type="entry name" value="Queuosine_synth"/>
    <property type="match status" value="1"/>
</dbReference>
<dbReference type="SUPFAM" id="SSF111337">
    <property type="entry name" value="QueA-like"/>
    <property type="match status" value="1"/>
</dbReference>
<reference key="1">
    <citation type="journal article" date="2007" name="PLoS ONE">
        <title>The complete genome sequence and analysis of the Epsilonproteobacterium Arcobacter butzleri.</title>
        <authorList>
            <person name="Miller W.G."/>
            <person name="Parker C.T."/>
            <person name="Rubenfield M."/>
            <person name="Mendz G.L."/>
            <person name="Woesten M.M.S.M."/>
            <person name="Ussery D.W."/>
            <person name="Stolz J.F."/>
            <person name="Binnewies T.T."/>
            <person name="Hallin P.F."/>
            <person name="Wang G."/>
            <person name="Malek J.A."/>
            <person name="Rogosin A."/>
            <person name="Stanker L.H."/>
            <person name="Mandrell R.E."/>
        </authorList>
    </citation>
    <scope>NUCLEOTIDE SEQUENCE [LARGE SCALE GENOMIC DNA]</scope>
    <source>
        <strain>RM4018</strain>
    </source>
</reference>
<name>QUEA_ALIB4</name>
<feature type="chain" id="PRO_1000057737" description="S-adenosylmethionine:tRNA ribosyltransferase-isomerase">
    <location>
        <begin position="1"/>
        <end position="340"/>
    </location>
</feature>
<comment type="function">
    <text evidence="1">Transfers and isomerizes the ribose moiety from AdoMet to the 7-aminomethyl group of 7-deazaguanine (preQ1-tRNA) to give epoxyqueuosine (oQ-tRNA).</text>
</comment>
<comment type="catalytic activity">
    <reaction evidence="1">
        <text>7-aminomethyl-7-carbaguanosine(34) in tRNA + S-adenosyl-L-methionine = epoxyqueuosine(34) in tRNA + adenine + L-methionine + 2 H(+)</text>
        <dbReference type="Rhea" id="RHEA:32155"/>
        <dbReference type="Rhea" id="RHEA-COMP:10342"/>
        <dbReference type="Rhea" id="RHEA-COMP:18582"/>
        <dbReference type="ChEBI" id="CHEBI:15378"/>
        <dbReference type="ChEBI" id="CHEBI:16708"/>
        <dbReference type="ChEBI" id="CHEBI:57844"/>
        <dbReference type="ChEBI" id="CHEBI:59789"/>
        <dbReference type="ChEBI" id="CHEBI:82833"/>
        <dbReference type="ChEBI" id="CHEBI:194443"/>
        <dbReference type="EC" id="2.4.99.17"/>
    </reaction>
</comment>
<comment type="pathway">
    <text evidence="1">tRNA modification; tRNA-queuosine biosynthesis.</text>
</comment>
<comment type="subunit">
    <text evidence="1">Monomer.</text>
</comment>
<comment type="subcellular location">
    <subcellularLocation>
        <location evidence="1">Cytoplasm</location>
    </subcellularLocation>
</comment>
<comment type="similarity">
    <text evidence="1">Belongs to the QueA family.</text>
</comment>
<protein>
    <recommendedName>
        <fullName evidence="1">S-adenosylmethionine:tRNA ribosyltransferase-isomerase</fullName>
        <ecNumber evidence="1">2.4.99.17</ecNumber>
    </recommendedName>
    <alternativeName>
        <fullName evidence="1">Queuosine biosynthesis protein QueA</fullName>
    </alternativeName>
</protein>